<accession>Q9QXX0</accession>
<dbReference type="EMBL" id="AF171092">
    <property type="protein sequence ID" value="AAF15505.1"/>
    <property type="molecule type" value="mRNA"/>
</dbReference>
<dbReference type="EMBL" id="BC058675">
    <property type="protein sequence ID" value="AAH58675.1"/>
    <property type="molecule type" value="mRNA"/>
</dbReference>
<dbReference type="CCDS" id="CCDS16797.1"/>
<dbReference type="RefSeq" id="NP_038850.1">
    <property type="nucleotide sequence ID" value="NM_013822.5"/>
</dbReference>
<dbReference type="BMRB" id="Q9QXX0"/>
<dbReference type="SASBDB" id="Q9QXX0"/>
<dbReference type="SMR" id="Q9QXX0"/>
<dbReference type="BioGRID" id="200854">
    <property type="interactions" value="6"/>
</dbReference>
<dbReference type="FunCoup" id="Q9QXX0">
    <property type="interactions" value="743"/>
</dbReference>
<dbReference type="STRING" id="10090.ENSMUSP00000028735"/>
<dbReference type="GlyConnect" id="2632">
    <property type="glycosylation" value="1 N-Linked glycan (1 site)"/>
</dbReference>
<dbReference type="GlyCosmos" id="Q9QXX0">
    <property type="glycosylation" value="9 sites, 1 glycan"/>
</dbReference>
<dbReference type="GlyGen" id="Q9QXX0">
    <property type="glycosylation" value="10 sites, 4 N-linked glycans (3 sites)"/>
</dbReference>
<dbReference type="iPTMnet" id="Q9QXX0"/>
<dbReference type="PhosphoSitePlus" id="Q9QXX0"/>
<dbReference type="SwissPalm" id="Q9QXX0"/>
<dbReference type="PaxDb" id="10090-ENSMUSP00000028735"/>
<dbReference type="ProteomicsDB" id="269418"/>
<dbReference type="Pumba" id="Q9QXX0"/>
<dbReference type="ABCD" id="Q9QXX0">
    <property type="antibodies" value="2 sequenced antibodies"/>
</dbReference>
<dbReference type="Antibodypedia" id="4153">
    <property type="antibodies" value="952 antibodies from 42 providers"/>
</dbReference>
<dbReference type="DNASU" id="16449"/>
<dbReference type="Ensembl" id="ENSMUST00000028735.8">
    <property type="protein sequence ID" value="ENSMUSP00000028735.8"/>
    <property type="gene ID" value="ENSMUSG00000027276.8"/>
</dbReference>
<dbReference type="GeneID" id="16449"/>
<dbReference type="KEGG" id="mmu:16449"/>
<dbReference type="UCSC" id="uc008moz.2">
    <property type="organism name" value="mouse"/>
</dbReference>
<dbReference type="AGR" id="MGI:1095416"/>
<dbReference type="CTD" id="182"/>
<dbReference type="MGI" id="MGI:1095416">
    <property type="gene designation" value="Jag1"/>
</dbReference>
<dbReference type="VEuPathDB" id="HostDB:ENSMUSG00000027276"/>
<dbReference type="eggNOG" id="KOG1217">
    <property type="taxonomic scope" value="Eukaryota"/>
</dbReference>
<dbReference type="GeneTree" id="ENSGT00940000160148"/>
<dbReference type="HOGENOM" id="CLU_004732_0_0_1"/>
<dbReference type="InParanoid" id="Q9QXX0"/>
<dbReference type="OMA" id="CHPVHGH"/>
<dbReference type="OrthoDB" id="283575at2759"/>
<dbReference type="PhylomeDB" id="Q9QXX0"/>
<dbReference type="TreeFam" id="TF351835"/>
<dbReference type="Reactome" id="R-MMU-2979096">
    <property type="pathway name" value="NOTCH2 Activation and Transmission of Signal to the Nucleus"/>
</dbReference>
<dbReference type="Reactome" id="R-MMU-9013149">
    <property type="pathway name" value="RAC1 GTPase cycle"/>
</dbReference>
<dbReference type="Reactome" id="R-MMU-9013423">
    <property type="pathway name" value="RAC3 GTPase cycle"/>
</dbReference>
<dbReference type="Reactome" id="R-MMU-9013507">
    <property type="pathway name" value="NOTCH3 Activation and Transmission of Signal to the Nucleus"/>
</dbReference>
<dbReference type="BioGRID-ORCS" id="16449">
    <property type="hits" value="1 hit in 78 CRISPR screens"/>
</dbReference>
<dbReference type="ChiTaRS" id="Jag1">
    <property type="organism name" value="mouse"/>
</dbReference>
<dbReference type="PRO" id="PR:Q9QXX0"/>
<dbReference type="Proteomes" id="UP000000589">
    <property type="component" value="Chromosome 2"/>
</dbReference>
<dbReference type="RNAct" id="Q9QXX0">
    <property type="molecule type" value="protein"/>
</dbReference>
<dbReference type="Bgee" id="ENSMUSG00000027276">
    <property type="expression patterns" value="Expressed in secondary oocyte and 334 other cell types or tissues"/>
</dbReference>
<dbReference type="ExpressionAtlas" id="Q9QXX0">
    <property type="expression patterns" value="baseline and differential"/>
</dbReference>
<dbReference type="GO" id="GO:0005912">
    <property type="term" value="C:adherens junction"/>
    <property type="evidence" value="ECO:0000314"/>
    <property type="project" value="UniProtKB"/>
</dbReference>
<dbReference type="GO" id="GO:0045177">
    <property type="term" value="C:apical part of cell"/>
    <property type="evidence" value="ECO:0000314"/>
    <property type="project" value="UniProtKB"/>
</dbReference>
<dbReference type="GO" id="GO:0016324">
    <property type="term" value="C:apical plasma membrane"/>
    <property type="evidence" value="ECO:0000314"/>
    <property type="project" value="UniProtKB"/>
</dbReference>
<dbReference type="GO" id="GO:0005886">
    <property type="term" value="C:plasma membrane"/>
    <property type="evidence" value="ECO:0000314"/>
    <property type="project" value="MGI"/>
</dbReference>
<dbReference type="GO" id="GO:0005509">
    <property type="term" value="F:calcium ion binding"/>
    <property type="evidence" value="ECO:0000303"/>
    <property type="project" value="UniProtKB"/>
</dbReference>
<dbReference type="GO" id="GO:0060090">
    <property type="term" value="F:molecular adaptor activity"/>
    <property type="evidence" value="ECO:0007669"/>
    <property type="project" value="Ensembl"/>
</dbReference>
<dbReference type="GO" id="GO:0005112">
    <property type="term" value="F:Notch binding"/>
    <property type="evidence" value="ECO:0000353"/>
    <property type="project" value="UniProtKB"/>
</dbReference>
<dbReference type="GO" id="GO:0005543">
    <property type="term" value="F:phospholipid binding"/>
    <property type="evidence" value="ECO:0007669"/>
    <property type="project" value="Ensembl"/>
</dbReference>
<dbReference type="GO" id="GO:0009887">
    <property type="term" value="P:animal organ morphogenesis"/>
    <property type="evidence" value="ECO:0000315"/>
    <property type="project" value="MGI"/>
</dbReference>
<dbReference type="GO" id="GO:0035909">
    <property type="term" value="P:aorta morphogenesis"/>
    <property type="evidence" value="ECO:0000315"/>
    <property type="project" value="BHF-UCL"/>
</dbReference>
<dbReference type="GO" id="GO:0001974">
    <property type="term" value="P:blood vessel remodeling"/>
    <property type="evidence" value="ECO:0000315"/>
    <property type="project" value="MGI"/>
</dbReference>
<dbReference type="GO" id="GO:0043010">
    <property type="term" value="P:camera-type eye development"/>
    <property type="evidence" value="ECO:0000315"/>
    <property type="project" value="MGI"/>
</dbReference>
<dbReference type="GO" id="GO:0061309">
    <property type="term" value="P:cardiac neural crest cell development involved in outflow tract morphogenesis"/>
    <property type="evidence" value="ECO:0000315"/>
    <property type="project" value="BHF-UCL"/>
</dbReference>
<dbReference type="GO" id="GO:0003215">
    <property type="term" value="P:cardiac right ventricle morphogenesis"/>
    <property type="evidence" value="ECO:0000315"/>
    <property type="project" value="BHF-UCL"/>
</dbReference>
<dbReference type="GO" id="GO:0060411">
    <property type="term" value="P:cardiac septum morphogenesis"/>
    <property type="evidence" value="ECO:0000315"/>
    <property type="project" value="BHF-UCL"/>
</dbReference>
<dbReference type="GO" id="GO:0061073">
    <property type="term" value="P:ciliary body morphogenesis"/>
    <property type="evidence" value="ECO:0000315"/>
    <property type="project" value="MGI"/>
</dbReference>
<dbReference type="GO" id="GO:0072017">
    <property type="term" value="P:distal tubule development"/>
    <property type="evidence" value="ECO:0000270"/>
    <property type="project" value="UniProtKB"/>
</dbReference>
<dbReference type="GO" id="GO:0061444">
    <property type="term" value="P:endocardial cushion cell development"/>
    <property type="evidence" value="ECO:0000315"/>
    <property type="project" value="BHF-UCL"/>
</dbReference>
<dbReference type="GO" id="GO:0002085">
    <property type="term" value="P:inhibition of neuroepithelial cell differentiation"/>
    <property type="evidence" value="ECO:0000315"/>
    <property type="project" value="MGI"/>
</dbReference>
<dbReference type="GO" id="GO:0042491">
    <property type="term" value="P:inner ear auditory receptor cell differentiation"/>
    <property type="evidence" value="ECO:0000315"/>
    <property type="project" value="MGI"/>
</dbReference>
<dbReference type="GO" id="GO:0048839">
    <property type="term" value="P:inner ear development"/>
    <property type="evidence" value="ECO:0000315"/>
    <property type="project" value="UniProtKB"/>
</dbReference>
<dbReference type="GO" id="GO:0072070">
    <property type="term" value="P:loop of Henle development"/>
    <property type="evidence" value="ECO:0000270"/>
    <property type="project" value="UniProtKB"/>
</dbReference>
<dbReference type="GO" id="GO:0002011">
    <property type="term" value="P:morphogenesis of an epithelial sheet"/>
    <property type="evidence" value="ECO:0000315"/>
    <property type="project" value="MGI"/>
</dbReference>
<dbReference type="GO" id="GO:0030336">
    <property type="term" value="P:negative regulation of cell migration"/>
    <property type="evidence" value="ECO:0007669"/>
    <property type="project" value="Ensembl"/>
</dbReference>
<dbReference type="GO" id="GO:0022408">
    <property type="term" value="P:negative regulation of cell-cell adhesion"/>
    <property type="evidence" value="ECO:0007669"/>
    <property type="project" value="Ensembl"/>
</dbReference>
<dbReference type="GO" id="GO:0001953">
    <property type="term" value="P:negative regulation of cell-matrix adhesion"/>
    <property type="evidence" value="ECO:0007669"/>
    <property type="project" value="Ensembl"/>
</dbReference>
<dbReference type="GO" id="GO:0045602">
    <property type="term" value="P:negative regulation of endothelial cell differentiation"/>
    <property type="evidence" value="ECO:0000314"/>
    <property type="project" value="BHF-UCL"/>
</dbReference>
<dbReference type="GO" id="GO:0045599">
    <property type="term" value="P:negative regulation of fat cell differentiation"/>
    <property type="evidence" value="ECO:0000314"/>
    <property type="project" value="MGI"/>
</dbReference>
<dbReference type="GO" id="GO:0045665">
    <property type="term" value="P:negative regulation of neuron differentiation"/>
    <property type="evidence" value="ECO:0000315"/>
    <property type="project" value="MGI"/>
</dbReference>
<dbReference type="GO" id="GO:2000737">
    <property type="term" value="P:negative regulation of stem cell differentiation"/>
    <property type="evidence" value="ECO:0007669"/>
    <property type="project" value="Ensembl"/>
</dbReference>
<dbReference type="GO" id="GO:0072006">
    <property type="term" value="P:nephron development"/>
    <property type="evidence" value="ECO:0000315"/>
    <property type="project" value="UniProtKB"/>
</dbReference>
<dbReference type="GO" id="GO:0061101">
    <property type="term" value="P:neuroendocrine cell differentiation"/>
    <property type="evidence" value="ECO:0000315"/>
    <property type="project" value="MGI"/>
</dbReference>
<dbReference type="GO" id="GO:0030182">
    <property type="term" value="P:neuron differentiation"/>
    <property type="evidence" value="ECO:0000315"/>
    <property type="project" value="MGI"/>
</dbReference>
<dbReference type="GO" id="GO:0097150">
    <property type="term" value="P:neuronal stem cell population maintenance"/>
    <property type="evidence" value="ECO:0007669"/>
    <property type="project" value="Ensembl"/>
</dbReference>
<dbReference type="GO" id="GO:0007219">
    <property type="term" value="P:Notch signaling pathway"/>
    <property type="evidence" value="ECO:0000314"/>
    <property type="project" value="MGI"/>
</dbReference>
<dbReference type="GO" id="GO:0072015">
    <property type="term" value="P:podocyte development"/>
    <property type="evidence" value="ECO:0000315"/>
    <property type="project" value="UniProtKB"/>
</dbReference>
<dbReference type="GO" id="GO:0045639">
    <property type="term" value="P:positive regulation of myeloid cell differentiation"/>
    <property type="evidence" value="ECO:0000314"/>
    <property type="project" value="MGI"/>
</dbReference>
<dbReference type="GO" id="GO:0045747">
    <property type="term" value="P:positive regulation of Notch signaling pathway"/>
    <property type="evidence" value="ECO:0000314"/>
    <property type="project" value="UniProtKB"/>
</dbReference>
<dbReference type="GO" id="GO:0045669">
    <property type="term" value="P:positive regulation of osteoblast differentiation"/>
    <property type="evidence" value="ECO:0000314"/>
    <property type="project" value="MGI"/>
</dbReference>
<dbReference type="GO" id="GO:0045944">
    <property type="term" value="P:positive regulation of transcription by RNA polymerase II"/>
    <property type="evidence" value="ECO:0000315"/>
    <property type="project" value="BHF-UCL"/>
</dbReference>
<dbReference type="GO" id="GO:0061156">
    <property type="term" value="P:pulmonary artery morphogenesis"/>
    <property type="evidence" value="ECO:0000250"/>
    <property type="project" value="BHF-UCL"/>
</dbReference>
<dbReference type="GO" id="GO:0003184">
    <property type="term" value="P:pulmonary valve morphogenesis"/>
    <property type="evidence" value="ECO:0000250"/>
    <property type="project" value="BHF-UCL"/>
</dbReference>
<dbReference type="GO" id="GO:0050678">
    <property type="term" value="P:regulation of epithelial cell proliferation"/>
    <property type="evidence" value="ECO:0000316"/>
    <property type="project" value="MGI"/>
</dbReference>
<dbReference type="GO" id="GO:0032495">
    <property type="term" value="P:response to muramyl dipeptide"/>
    <property type="evidence" value="ECO:0000314"/>
    <property type="project" value="BHF-UCL"/>
</dbReference>
<dbReference type="GO" id="GO:0002456">
    <property type="term" value="P:T cell mediated immunity"/>
    <property type="evidence" value="ECO:0007669"/>
    <property type="project" value="Ensembl"/>
</dbReference>
<dbReference type="CDD" id="cd00054">
    <property type="entry name" value="EGF_CA"/>
    <property type="match status" value="13"/>
</dbReference>
<dbReference type="FunFam" id="2.10.25.10:FF:000018">
    <property type="entry name" value="Delta-like 1"/>
    <property type="match status" value="1"/>
</dbReference>
<dbReference type="FunFam" id="2.10.25.10:FF:000007">
    <property type="entry name" value="Delta-like protein"/>
    <property type="match status" value="4"/>
</dbReference>
<dbReference type="FunFam" id="2.10.25.10:FF:000061">
    <property type="entry name" value="Delta-like protein"/>
    <property type="match status" value="1"/>
</dbReference>
<dbReference type="FunFam" id="2.10.25.10:FF:000117">
    <property type="entry name" value="Delta-like protein"/>
    <property type="match status" value="1"/>
</dbReference>
<dbReference type="FunFam" id="2.10.25.10:FF:000148">
    <property type="entry name" value="Delta-like protein"/>
    <property type="match status" value="1"/>
</dbReference>
<dbReference type="FunFam" id="2.10.25.10:FF:000181">
    <property type="entry name" value="Delta-like protein"/>
    <property type="match status" value="1"/>
</dbReference>
<dbReference type="FunFam" id="2.10.25.10:FF:000229">
    <property type="entry name" value="Delta-like protein"/>
    <property type="match status" value="1"/>
</dbReference>
<dbReference type="FunFam" id="2.10.25.10:FF:000431">
    <property type="entry name" value="Delta-like protein"/>
    <property type="match status" value="1"/>
</dbReference>
<dbReference type="FunFam" id="2.10.25.140:FF:000001">
    <property type="entry name" value="Delta-like protein"/>
    <property type="match status" value="1"/>
</dbReference>
<dbReference type="FunFam" id="2.60.40.3510:FF:000001">
    <property type="entry name" value="Delta-like protein"/>
    <property type="match status" value="1"/>
</dbReference>
<dbReference type="FunFam" id="2.10.25.10:FF:000143">
    <property type="entry name" value="Protein crumbs 1"/>
    <property type="match status" value="1"/>
</dbReference>
<dbReference type="FunFam" id="2.10.25.10:FF:000122">
    <property type="entry name" value="Protein crumbs homolog 2"/>
    <property type="match status" value="1"/>
</dbReference>
<dbReference type="FunFam" id="2.10.25.10:FF:000146">
    <property type="entry name" value="Putative neurogenic locus notch"/>
    <property type="match status" value="1"/>
</dbReference>
<dbReference type="Gene3D" id="2.10.25.140">
    <property type="match status" value="1"/>
</dbReference>
<dbReference type="Gene3D" id="2.60.40.3510">
    <property type="match status" value="1"/>
</dbReference>
<dbReference type="Gene3D" id="2.10.25.10">
    <property type="entry name" value="Laminin"/>
    <property type="match status" value="15"/>
</dbReference>
<dbReference type="InterPro" id="IPR001774">
    <property type="entry name" value="DSL"/>
</dbReference>
<dbReference type="InterPro" id="IPR001881">
    <property type="entry name" value="EGF-like_Ca-bd_dom"/>
</dbReference>
<dbReference type="InterPro" id="IPR013032">
    <property type="entry name" value="EGF-like_CS"/>
</dbReference>
<dbReference type="InterPro" id="IPR000742">
    <property type="entry name" value="EGF-like_dom"/>
</dbReference>
<dbReference type="InterPro" id="IPR000152">
    <property type="entry name" value="EGF-type_Asp/Asn_hydroxyl_site"/>
</dbReference>
<dbReference type="InterPro" id="IPR018097">
    <property type="entry name" value="EGF_Ca-bd_CS"/>
</dbReference>
<dbReference type="InterPro" id="IPR009030">
    <property type="entry name" value="Growth_fac_rcpt_cys_sf"/>
</dbReference>
<dbReference type="InterPro" id="IPR056986">
    <property type="entry name" value="JAG1_1/2_dom"/>
</dbReference>
<dbReference type="InterPro" id="IPR026219">
    <property type="entry name" value="Jagged/Serrate"/>
</dbReference>
<dbReference type="InterPro" id="IPR011651">
    <property type="entry name" value="Notch_ligand_N"/>
</dbReference>
<dbReference type="InterPro" id="IPR001007">
    <property type="entry name" value="VWF_dom"/>
</dbReference>
<dbReference type="PANTHER" id="PTHR12916">
    <property type="entry name" value="CYTOCHROME C OXIDASE POLYPEPTIDE VIC-2"/>
    <property type="match status" value="1"/>
</dbReference>
<dbReference type="PANTHER" id="PTHR12916:SF12">
    <property type="entry name" value="DELTA-LIKE PROTEIN"/>
    <property type="match status" value="1"/>
</dbReference>
<dbReference type="Pfam" id="PF01414">
    <property type="entry name" value="DSL"/>
    <property type="match status" value="1"/>
</dbReference>
<dbReference type="Pfam" id="PF00008">
    <property type="entry name" value="EGF"/>
    <property type="match status" value="5"/>
</dbReference>
<dbReference type="Pfam" id="PF21700">
    <property type="entry name" value="EGF_DL_JAG"/>
    <property type="match status" value="1"/>
</dbReference>
<dbReference type="Pfam" id="PF25024">
    <property type="entry name" value="EGF_TEN"/>
    <property type="match status" value="1"/>
</dbReference>
<dbReference type="Pfam" id="PF12661">
    <property type="entry name" value="hEGF"/>
    <property type="match status" value="2"/>
</dbReference>
<dbReference type="Pfam" id="PF23575">
    <property type="entry name" value="JAG1"/>
    <property type="match status" value="1"/>
</dbReference>
<dbReference type="Pfam" id="PF07657">
    <property type="entry name" value="MNNL"/>
    <property type="match status" value="1"/>
</dbReference>
<dbReference type="PRINTS" id="PR00010">
    <property type="entry name" value="EGFBLOOD"/>
</dbReference>
<dbReference type="PRINTS" id="PR02059">
    <property type="entry name" value="JAGGEDFAMILY"/>
</dbReference>
<dbReference type="SMART" id="SM00051">
    <property type="entry name" value="DSL"/>
    <property type="match status" value="1"/>
</dbReference>
<dbReference type="SMART" id="SM00181">
    <property type="entry name" value="EGF"/>
    <property type="match status" value="16"/>
</dbReference>
<dbReference type="SMART" id="SM00179">
    <property type="entry name" value="EGF_CA"/>
    <property type="match status" value="14"/>
</dbReference>
<dbReference type="SMART" id="SM00214">
    <property type="entry name" value="VWC"/>
    <property type="match status" value="1"/>
</dbReference>
<dbReference type="SMART" id="SM00215">
    <property type="entry name" value="VWC_out"/>
    <property type="match status" value="1"/>
</dbReference>
<dbReference type="SUPFAM" id="SSF57196">
    <property type="entry name" value="EGF/Laminin"/>
    <property type="match status" value="4"/>
</dbReference>
<dbReference type="SUPFAM" id="SSF57184">
    <property type="entry name" value="Growth factor receptor domain"/>
    <property type="match status" value="3"/>
</dbReference>
<dbReference type="PROSITE" id="PS00010">
    <property type="entry name" value="ASX_HYDROXYL"/>
    <property type="match status" value="10"/>
</dbReference>
<dbReference type="PROSITE" id="PS51051">
    <property type="entry name" value="DSL"/>
    <property type="match status" value="1"/>
</dbReference>
<dbReference type="PROSITE" id="PS00022">
    <property type="entry name" value="EGF_1"/>
    <property type="match status" value="16"/>
</dbReference>
<dbReference type="PROSITE" id="PS01186">
    <property type="entry name" value="EGF_2"/>
    <property type="match status" value="12"/>
</dbReference>
<dbReference type="PROSITE" id="PS50026">
    <property type="entry name" value="EGF_3"/>
    <property type="match status" value="15"/>
</dbReference>
<dbReference type="PROSITE" id="PS01187">
    <property type="entry name" value="EGF_CA"/>
    <property type="match status" value="8"/>
</dbReference>
<evidence type="ECO:0000250" key="1"/>
<evidence type="ECO:0000250" key="2">
    <source>
        <dbReference type="UniProtKB" id="P78504"/>
    </source>
</evidence>
<evidence type="ECO:0000255" key="3"/>
<evidence type="ECO:0000255" key="4">
    <source>
        <dbReference type="PROSITE-ProRule" id="PRU00076"/>
    </source>
</evidence>
<evidence type="ECO:0000255" key="5">
    <source>
        <dbReference type="PROSITE-ProRule" id="PRU00377"/>
    </source>
</evidence>
<evidence type="ECO:0000256" key="6">
    <source>
        <dbReference type="SAM" id="MobiDB-lite"/>
    </source>
</evidence>
<evidence type="ECO:0000269" key="7">
    <source>
    </source>
</evidence>
<evidence type="ECO:0000269" key="8">
    <source>
    </source>
</evidence>
<evidence type="ECO:0000269" key="9">
    <source>
    </source>
</evidence>
<comment type="function">
    <text evidence="1">Ligand for multiple Notch receptors and involved in the mediation of Notch signaling. May be involved in cell-fate decisions during hematopoiesis. Seems to be involved in early and late stages of mammalian cardiovascular development. Inhibits myoblast differentiation (By similarity). May regulate fibroblast growth factor-induced angiogenesis.</text>
</comment>
<comment type="subunit">
    <text evidence="7">Interacts with NOTCH1, NOTCH2 and NOTCH3.</text>
</comment>
<comment type="subcellular location">
    <subcellularLocation>
        <location>Membrane</location>
        <topology>Single-pass type I membrane protein</topology>
    </subcellularLocation>
    <subcellularLocation>
        <location evidence="2">Cell membrane</location>
    </subcellularLocation>
</comment>
<comment type="tissue specificity">
    <text evidence="8">Widely expressed in many tissues, with highest expression in brain, heart, muscle and thymus.</text>
</comment>
<comment type="developmental stage">
    <text>At 8.75-9.75 dpc expression was detected in structures that include those destined to contribute to the cardiovascular system of the adult heart. Expression was also detected in the mesencephalon and rhombencephalon.</text>
</comment>
<comment type="domain">
    <text>The DSL domain is indispensable and sufficient for binding to NOTCH2.</text>
</comment>
<sequence>MRSPRTRGRPGRPLSLLLALLCALRAKVCGASGQFELEILSMQNVNGELQNGNCCGGVRNPGDRKCTRDECDTYFKVCLKEYQSRVTAGGPCSFGSGSTPVIGGNTFNLKASRGNDRNRIVLPFSFAWPRSYTLLVEAWDSSNDTIQPDSIIEKASHSGMINPSRQWQTLKQNTGIAHFEYQIRVTCDDHYYGFGCNKFCRPRDDFFGHYACDQNGNKTCMEGWMGPDCNKAICRQGCSPKHGSCKLPGDCRCQYGWQGLYCDKCIPHPGCVHGTCNEPWQCLCETNWGGQLCDKDLNYCGTHQPCLNRGTCSNTGPDKYQCSCPEGYSGPNCEIAEHACLSDPCHNRGSCKETSSGFECECSPGWTGPTCSTNIDDCSPNNCSHGGTCQDLVNGFKCVCPPQWTGKTCQLDANECEAKPCVNARSCKNLIASYYCDCLPGWMGQNCDININDCLGQCQNDASCRDLVNGYRCICPPGYAGDHCERDIDECASNPCLNGGHCQNEINRFQCLCPTGFSGNLCQLDIDYCEPNPCQNGAQCYNRASDYFCKCPEDYEGKNCSHLKDHCRTTTCEVIDSCTVAMASNDTPEGVRYISSNVCGPHGKCKSQSGGKFTCDCNKGFTGTYCHENINDCESNPCKNGGTCIDGVNSYKCICSDGWEGAHCENNINDCSQNPCHYGGTCRDLVNDFYCDCKNGWKGKTCHSRDSQCDEATCNNGGTCYDEVDTFKCMCPGGWEGTTCNIARNSSCLPNPCHNGGTCVVNGDSFTCVCKEGWEGPICTQNTNDCSPHPCYNSGTCVDGDNWYRCECAPGFAGPDCRININECQSSPCAFGATCVDEINGYQCICPPGHSGAKCHEVSGRSCITMGRVILDGAKWDDDCNTCQCLNGRVACSKVWCGPRPCRLHKSHNECPSGQSCIPVLDDQCFVRPCTGVGECRSSSLQPVKTKCTSDSYYQDNCANITFTFNKEMMSPGLTTEHICSELRNLNILKNVSAEYSIYIACEPSLSANNEIHVAISAEDIRDDGNPVKEITDKIIDLVSKRDGNSSLIAAVAEVRVQRRPLKNRTDFLVPLLSSVLTVAWVCCLVTAFYWCVRKRRKPSSHTHSAPEDNTTNNVREQLNQIKNPIEKHGANTVPIKDYENKNSKMSKIRTHNSEVEEDDMDKHQQKVRFAKQPVYTLVDREEKAPSGTPTKHPNWTNKQDNRDLESAQSLNRMEYIV</sequence>
<name>JAG1_MOUSE</name>
<organism>
    <name type="scientific">Mus musculus</name>
    <name type="common">Mouse</name>
    <dbReference type="NCBI Taxonomy" id="10090"/>
    <lineage>
        <taxon>Eukaryota</taxon>
        <taxon>Metazoa</taxon>
        <taxon>Chordata</taxon>
        <taxon>Craniata</taxon>
        <taxon>Vertebrata</taxon>
        <taxon>Euteleostomi</taxon>
        <taxon>Mammalia</taxon>
        <taxon>Eutheria</taxon>
        <taxon>Euarchontoglires</taxon>
        <taxon>Glires</taxon>
        <taxon>Rodentia</taxon>
        <taxon>Myomorpha</taxon>
        <taxon>Muroidea</taxon>
        <taxon>Muridae</taxon>
        <taxon>Murinae</taxon>
        <taxon>Mus</taxon>
        <taxon>Mus</taxon>
    </lineage>
</organism>
<feature type="signal peptide" evidence="3">
    <location>
        <begin position="1"/>
        <end position="33"/>
    </location>
</feature>
<feature type="chain" id="PRO_0000007626" description="Protein jagged-1">
    <location>
        <begin position="34"/>
        <end position="1218"/>
    </location>
</feature>
<feature type="topological domain" description="Extracellular" evidence="3">
    <location>
        <begin position="34"/>
        <end position="1067"/>
    </location>
</feature>
<feature type="transmembrane region" description="Helical" evidence="3">
    <location>
        <begin position="1068"/>
        <end position="1093"/>
    </location>
</feature>
<feature type="topological domain" description="Cytoplasmic" evidence="3">
    <location>
        <begin position="1094"/>
        <end position="1218"/>
    </location>
</feature>
<feature type="domain" description="DSL" evidence="5">
    <location>
        <begin position="185"/>
        <end position="229"/>
    </location>
</feature>
<feature type="domain" description="EGF-like 1" evidence="4">
    <location>
        <begin position="230"/>
        <end position="263"/>
    </location>
</feature>
<feature type="domain" description="EGF-like 2; atypical" evidence="4">
    <location>
        <begin position="264"/>
        <end position="294"/>
    </location>
</feature>
<feature type="domain" description="EGF-like 3" evidence="4">
    <location>
        <begin position="296"/>
        <end position="334"/>
    </location>
</feature>
<feature type="domain" description="EGF-like 4" evidence="4">
    <location>
        <begin position="336"/>
        <end position="372"/>
    </location>
</feature>
<feature type="domain" description="EGF-like 5; calcium-binding" evidence="4">
    <location>
        <begin position="374"/>
        <end position="410"/>
    </location>
</feature>
<feature type="domain" description="EGF-like 6; calcium-binding" evidence="4">
    <location>
        <begin position="412"/>
        <end position="448"/>
    </location>
</feature>
<feature type="domain" description="EGF-like 7; calcium-binding" evidence="4">
    <location>
        <begin position="450"/>
        <end position="485"/>
    </location>
</feature>
<feature type="domain" description="EGF-like 8; calcium-binding" evidence="4">
    <location>
        <begin position="487"/>
        <end position="523"/>
    </location>
</feature>
<feature type="domain" description="EGF-like 9" evidence="4">
    <location>
        <begin position="525"/>
        <end position="561"/>
    </location>
</feature>
<feature type="domain" description="EGF-like 10" evidence="4">
    <location>
        <begin position="586"/>
        <end position="627"/>
    </location>
</feature>
<feature type="domain" description="EGF-like 11; calcium-binding" evidence="4">
    <location>
        <begin position="629"/>
        <end position="665"/>
    </location>
</feature>
<feature type="domain" description="EGF-like 12; calcium-binding" evidence="4">
    <location>
        <begin position="667"/>
        <end position="703"/>
    </location>
</feature>
<feature type="domain" description="EGF-like 13" evidence="4">
    <location>
        <begin position="705"/>
        <end position="741"/>
    </location>
</feature>
<feature type="domain" description="EGF-like 14" evidence="4">
    <location>
        <begin position="744"/>
        <end position="780"/>
    </location>
</feature>
<feature type="domain" description="EGF-like 15; calcium-binding" evidence="4">
    <location>
        <begin position="782"/>
        <end position="818"/>
    </location>
</feature>
<feature type="domain" description="EGF-like 16; calcium-binding" evidence="4">
    <location>
        <begin position="820"/>
        <end position="856"/>
    </location>
</feature>
<feature type="region of interest" description="Important for interaction with NOTCH1" evidence="1">
    <location>
        <begin position="199"/>
        <end position="207"/>
    </location>
</feature>
<feature type="region of interest" description="Disordered" evidence="6">
    <location>
        <begin position="1181"/>
        <end position="1218"/>
    </location>
</feature>
<feature type="compositionally biased region" description="Polar residues" evidence="6">
    <location>
        <begin position="1188"/>
        <end position="1199"/>
    </location>
</feature>
<feature type="glycosylation site" description="N-linked (GlcNAc...) asparagine" evidence="3">
    <location>
        <position position="143"/>
    </location>
</feature>
<feature type="glycosylation site" description="N-linked (GlcNAc...) asparagine" evidence="3">
    <location>
        <position position="217"/>
    </location>
</feature>
<feature type="glycosylation site" description="N-linked (GlcNAc...) asparagine" evidence="3">
    <location>
        <position position="382"/>
    </location>
</feature>
<feature type="glycosylation site" description="N-linked (GlcNAc...) asparagine" evidence="3">
    <location>
        <position position="559"/>
    </location>
</feature>
<feature type="glycosylation site" description="N-linked (GlcNAc...) asparagine" evidence="3">
    <location>
        <position position="745"/>
    </location>
</feature>
<feature type="glycosylation site" description="N-linked (GlcNAc...) asparagine" evidence="3">
    <location>
        <position position="960"/>
    </location>
</feature>
<feature type="glycosylation site" description="N-linked (GlcNAc...) asparagine" evidence="3">
    <location>
        <position position="991"/>
    </location>
</feature>
<feature type="glycosylation site" description="N-linked (GlcNAc...) asparagine" evidence="3">
    <location>
        <position position="1045"/>
    </location>
</feature>
<feature type="glycosylation site" description="N-linked (GlcNAc...) asparagine" evidence="3">
    <location>
        <position position="1064"/>
    </location>
</feature>
<feature type="disulfide bond" evidence="1">
    <location>
        <begin position="187"/>
        <end position="196"/>
    </location>
</feature>
<feature type="disulfide bond" evidence="1">
    <location>
        <begin position="200"/>
        <end position="212"/>
    </location>
</feature>
<feature type="disulfide bond" evidence="1">
    <location>
        <begin position="220"/>
        <end position="229"/>
    </location>
</feature>
<feature type="disulfide bond" evidence="1">
    <location>
        <begin position="234"/>
        <end position="245"/>
    </location>
</feature>
<feature type="disulfide bond" evidence="1">
    <location>
        <begin position="238"/>
        <end position="251"/>
    </location>
</feature>
<feature type="disulfide bond" evidence="1">
    <location>
        <begin position="253"/>
        <end position="262"/>
    </location>
</feature>
<feature type="disulfide bond" evidence="1">
    <location>
        <begin position="265"/>
        <end position="276"/>
    </location>
</feature>
<feature type="disulfide bond" evidence="1">
    <location>
        <begin position="271"/>
        <end position="282"/>
    </location>
</feature>
<feature type="disulfide bond" evidence="1">
    <location>
        <begin position="284"/>
        <end position="293"/>
    </location>
</feature>
<feature type="disulfide bond" evidence="1">
    <location>
        <begin position="300"/>
        <end position="312"/>
    </location>
</feature>
<feature type="disulfide bond" evidence="1">
    <location>
        <begin position="306"/>
        <end position="322"/>
    </location>
</feature>
<feature type="disulfide bond" evidence="1">
    <location>
        <begin position="324"/>
        <end position="333"/>
    </location>
</feature>
<feature type="disulfide bond" evidence="1">
    <location>
        <begin position="340"/>
        <end position="351"/>
    </location>
</feature>
<feature type="disulfide bond" evidence="1">
    <location>
        <begin position="345"/>
        <end position="360"/>
    </location>
</feature>
<feature type="disulfide bond" evidence="1">
    <location>
        <begin position="362"/>
        <end position="371"/>
    </location>
</feature>
<feature type="disulfide bond" evidence="1">
    <location>
        <begin position="378"/>
        <end position="389"/>
    </location>
</feature>
<feature type="disulfide bond" evidence="1">
    <location>
        <begin position="383"/>
        <end position="398"/>
    </location>
</feature>
<feature type="disulfide bond" evidence="1">
    <location>
        <begin position="400"/>
        <end position="409"/>
    </location>
</feature>
<feature type="disulfide bond" evidence="1">
    <location>
        <begin position="416"/>
        <end position="427"/>
    </location>
</feature>
<feature type="disulfide bond" evidence="1">
    <location>
        <begin position="421"/>
        <end position="436"/>
    </location>
</feature>
<feature type="disulfide bond" evidence="1">
    <location>
        <begin position="438"/>
        <end position="447"/>
    </location>
</feature>
<feature type="disulfide bond" evidence="1">
    <location>
        <begin position="454"/>
        <end position="464"/>
    </location>
</feature>
<feature type="disulfide bond" evidence="1">
    <location>
        <begin position="458"/>
        <end position="473"/>
    </location>
</feature>
<feature type="disulfide bond" evidence="1">
    <location>
        <begin position="475"/>
        <end position="484"/>
    </location>
</feature>
<feature type="disulfide bond" evidence="1">
    <location>
        <begin position="491"/>
        <end position="502"/>
    </location>
</feature>
<feature type="disulfide bond" evidence="1">
    <location>
        <begin position="496"/>
        <end position="511"/>
    </location>
</feature>
<feature type="disulfide bond" evidence="1">
    <location>
        <begin position="513"/>
        <end position="522"/>
    </location>
</feature>
<feature type="disulfide bond" evidence="1">
    <location>
        <begin position="529"/>
        <end position="540"/>
    </location>
</feature>
<feature type="disulfide bond" evidence="1">
    <location>
        <begin position="534"/>
        <end position="549"/>
    </location>
</feature>
<feature type="disulfide bond" evidence="1">
    <location>
        <begin position="551"/>
        <end position="560"/>
    </location>
</feature>
<feature type="disulfide bond" evidence="1">
    <location>
        <begin position="578"/>
        <end position="605"/>
    </location>
</feature>
<feature type="disulfide bond" evidence="1">
    <location>
        <begin position="599"/>
        <end position="615"/>
    </location>
</feature>
<feature type="disulfide bond" evidence="1">
    <location>
        <begin position="617"/>
        <end position="626"/>
    </location>
</feature>
<feature type="disulfide bond" evidence="1">
    <location>
        <begin position="633"/>
        <end position="644"/>
    </location>
</feature>
<feature type="disulfide bond" evidence="1">
    <location>
        <begin position="638"/>
        <end position="653"/>
    </location>
</feature>
<feature type="disulfide bond" evidence="1">
    <location>
        <begin position="655"/>
        <end position="664"/>
    </location>
</feature>
<feature type="disulfide bond" evidence="1">
    <location>
        <begin position="671"/>
        <end position="682"/>
    </location>
</feature>
<feature type="disulfide bond" evidence="1">
    <location>
        <begin position="676"/>
        <end position="691"/>
    </location>
</feature>
<feature type="disulfide bond" evidence="1">
    <location>
        <begin position="693"/>
        <end position="702"/>
    </location>
</feature>
<feature type="disulfide bond" evidence="1">
    <location>
        <begin position="709"/>
        <end position="720"/>
    </location>
</feature>
<feature type="disulfide bond" evidence="1">
    <location>
        <begin position="714"/>
        <end position="729"/>
    </location>
</feature>
<feature type="disulfide bond" evidence="1">
    <location>
        <begin position="731"/>
        <end position="740"/>
    </location>
</feature>
<feature type="disulfide bond" evidence="1">
    <location>
        <begin position="748"/>
        <end position="759"/>
    </location>
</feature>
<feature type="disulfide bond" evidence="1">
    <location>
        <begin position="753"/>
        <end position="768"/>
    </location>
</feature>
<feature type="disulfide bond" evidence="1">
    <location>
        <begin position="770"/>
        <end position="779"/>
    </location>
</feature>
<feature type="disulfide bond" evidence="1">
    <location>
        <begin position="786"/>
        <end position="797"/>
    </location>
</feature>
<feature type="disulfide bond" evidence="1">
    <location>
        <begin position="791"/>
        <end position="806"/>
    </location>
</feature>
<feature type="disulfide bond" evidence="1">
    <location>
        <begin position="808"/>
        <end position="817"/>
    </location>
</feature>
<feature type="disulfide bond" evidence="1">
    <location>
        <begin position="824"/>
        <end position="835"/>
    </location>
</feature>
<feature type="disulfide bond" evidence="1">
    <location>
        <begin position="829"/>
        <end position="844"/>
    </location>
</feature>
<feature type="disulfide bond" evidence="1">
    <location>
        <begin position="846"/>
        <end position="855"/>
    </location>
</feature>
<feature type="mutagenesis site" description="Heterozygous mutant mice exhibit mild peripheral neuropathy. Homozygous expression results in embryonic lethality by midgestation." evidence="9">
    <original>S</original>
    <variation>R</variation>
    <location>
        <position position="577"/>
    </location>
</feature>
<proteinExistence type="evidence at protein level"/>
<keyword id="KW-0106">Calcium</keyword>
<keyword id="KW-1003">Cell membrane</keyword>
<keyword id="KW-0217">Developmental protein</keyword>
<keyword id="KW-1015">Disulfide bond</keyword>
<keyword id="KW-0245">EGF-like domain</keyword>
<keyword id="KW-0325">Glycoprotein</keyword>
<keyword id="KW-0472">Membrane</keyword>
<keyword id="KW-0914">Notch signaling pathway</keyword>
<keyword id="KW-1185">Reference proteome</keyword>
<keyword id="KW-0677">Repeat</keyword>
<keyword id="KW-0732">Signal</keyword>
<keyword id="KW-0812">Transmembrane</keyword>
<keyword id="KW-1133">Transmembrane helix</keyword>
<reference key="1">
    <citation type="journal article" date="1999" name="J. Biol. Chem.">
        <title>Mouse Jagged1 physically interacts with Notch2 and other Notch receptors: assessment by quantitative methods.</title>
        <authorList>
            <person name="Shimizu K."/>
            <person name="Chiba S."/>
            <person name="Kumano K."/>
            <person name="Hosoya N."/>
            <person name="Takahashi T."/>
            <person name="Kanda Y."/>
            <person name="Hamada Y."/>
            <person name="Yazaki Y."/>
            <person name="Hirai H."/>
        </authorList>
    </citation>
    <scope>NUCLEOTIDE SEQUENCE [MRNA]</scope>
    <scope>INTERACTION WITH NOTHC1; NOTHC2 AND NOTCH3</scope>
    <source>
        <strain>Swiss Webster / NIH</strain>
    </source>
</reference>
<reference key="2">
    <citation type="journal article" date="2004" name="Genome Res.">
        <title>The status, quality, and expansion of the NIH full-length cDNA project: the Mammalian Gene Collection (MGC).</title>
        <authorList>
            <consortium name="The MGC Project Team"/>
        </authorList>
    </citation>
    <scope>NUCLEOTIDE SEQUENCE [LARGE SCALE MRNA]</scope>
    <source>
        <strain>C57BL/6J</strain>
        <tissue>Brain</tissue>
    </source>
</reference>
<reference key="3">
    <citation type="journal article" date="1999" name="Hum. Mol. Genet.">
        <title>The expression of Jagged1 in the developing mammalian heart correlates with cardiovascular disease in Alagille syndrome.</title>
        <authorList>
            <person name="Loomes K.M."/>
            <person name="Underkoffler L.A."/>
            <person name="Morabito J."/>
            <person name="Gottlieb S."/>
            <person name="Piccoli D.A."/>
            <person name="Spinner N.B."/>
            <person name="Baldwin H.S."/>
            <person name="Oakey R.J."/>
        </authorList>
    </citation>
    <scope>TISSUE SPECIFICITY</scope>
</reference>
<reference key="4">
    <citation type="journal article" date="2020" name="J. Clin. Invest.">
        <title>Dominant mutations of the Notch ligand Jagged1 cause peripheral neuropathy.</title>
        <authorList>
            <person name="Sullivan J.M."/>
            <person name="Motley W.W."/>
            <person name="Johnson J.O."/>
            <person name="Aisenberg W.H."/>
            <person name="Marshall K.L."/>
            <person name="Barwick K.E."/>
            <person name="Kong L."/>
            <person name="Huh J.S."/>
            <person name="Saavedra-Rivera P.C."/>
            <person name="McEntagart M.M."/>
            <person name="Marion M.H."/>
            <person name="Hicklin L.A."/>
            <person name="Modarres H."/>
            <person name="Baple E.L."/>
            <person name="Farah M.H."/>
            <person name="Zuberi A.R."/>
            <person name="Lutz C.M."/>
            <person name="Gaudet R."/>
            <person name="Traynor B.J."/>
            <person name="Crosby A.H."/>
            <person name="Sumner C.J."/>
        </authorList>
    </citation>
    <scope>MUTAGENESIS OF SER-577</scope>
</reference>
<protein>
    <recommendedName>
        <fullName>Protein jagged-1</fullName>
        <shortName>Jagged1</shortName>
    </recommendedName>
    <cdAntigenName>CD339</cdAntigenName>
</protein>
<gene>
    <name type="primary">Jag1</name>
</gene>